<evidence type="ECO:0000250" key="1"/>
<evidence type="ECO:0000255" key="2"/>
<evidence type="ECO:0000256" key="3">
    <source>
        <dbReference type="SAM" id="MobiDB-lite"/>
    </source>
</evidence>
<evidence type="ECO:0000305" key="4"/>
<proteinExistence type="evidence at transcript level"/>
<keyword id="KW-1003">Cell membrane</keyword>
<keyword id="KW-0176">Collagen</keyword>
<keyword id="KW-0472">Membrane</keyword>
<keyword id="KW-1185">Reference proteome</keyword>
<keyword id="KW-0677">Repeat</keyword>
<keyword id="KW-0735">Signal-anchor</keyword>
<keyword id="KW-0812">Transmembrane</keyword>
<keyword id="KW-1133">Transmembrane helix</keyword>
<comment type="subunit">
    <text evidence="1">Homotrimer.</text>
</comment>
<comment type="subcellular location">
    <subcellularLocation>
        <location evidence="1">Cell membrane</location>
        <topology evidence="1">Single-pass type II membrane protein</topology>
        <orientation evidence="1">Extracellular side</orientation>
    </subcellularLocation>
</comment>
<comment type="PTM">
    <text evidence="1">Undergoes proteolytic cleavage by furin protease to yield a 60 kDa soluble form that forms a homotrimer and exhibits a low affinity interaction with heparin.</text>
</comment>
<sequence>MGAGERAAGGGGAQDPGAGCGSRALSALCLLLSVGSAAACLLLGAQAAALHGRVAALEQERELLRHAGPSGALAAWAETHLERLLREKLDGVAKLRTVREAPSECICPPGPPGRRGKPGRRGDPGPPGQSGRDGYPGPLGLDGKPGLPGPKGEKGTPGDFGPRGAQGQDGVAGPPGPPGPPGARGPPGDTGKDGPRGAQGPAGPRGEPGQDGEMGPKGPPGPKGEPGIPGKKGDDGMANQPGLPGPPGPKGEPGDVGPRGENGVDGIPGLKGEPGHPGVDGATGPRGAPGLKGEQGDTVVIDYDGRILDALKGPPGPQGAPGPPGIPGAKGELGLPGAPGIDGEKGPKGPKGDPGEPGPAGPKGETGEMGLSGLPGADGPKGEKGESASDHLQESLAQIIVEPGPPGPPGPPGPMGLQGIQGPKGLDGAKGEKGTSGERGPHGLPGPVGPPGLIGLPGTKGEKGRPGEPGLDGFPGPRGEKGDRSERGEKGERGVPGRKGVKGQKGEPGPPGLDQPCPVGPDGLPVPGCWHK</sequence>
<name>CONA1_MOUSE</name>
<gene>
    <name type="primary">Col23a1</name>
</gene>
<dbReference type="EMBL" id="AF410792">
    <property type="protein sequence ID" value="AAN03649.1"/>
    <property type="molecule type" value="mRNA"/>
</dbReference>
<dbReference type="EMBL" id="AL645907">
    <property type="status" value="NOT_ANNOTATED_CDS"/>
    <property type="molecule type" value="Genomic_DNA"/>
</dbReference>
<dbReference type="EMBL" id="AL662843">
    <property type="status" value="NOT_ANNOTATED_CDS"/>
    <property type="molecule type" value="Genomic_DNA"/>
</dbReference>
<dbReference type="CCDS" id="CCDS24652.1"/>
<dbReference type="RefSeq" id="NP_700442.2">
    <property type="nucleotide sequence ID" value="NM_153393.2"/>
</dbReference>
<dbReference type="SMR" id="Q8K4G2"/>
<dbReference type="BioGRID" id="231903">
    <property type="interactions" value="3"/>
</dbReference>
<dbReference type="ComplexPortal" id="CPX-3005">
    <property type="entry name" value="Collagen type XXIII trimer"/>
</dbReference>
<dbReference type="FunCoup" id="Q8K4G2">
    <property type="interactions" value="113"/>
</dbReference>
<dbReference type="STRING" id="10090.ENSMUSP00000099826"/>
<dbReference type="iPTMnet" id="Q8K4G2"/>
<dbReference type="PhosphoSitePlus" id="Q8K4G2"/>
<dbReference type="PaxDb" id="10090-ENSMUSP00000099826"/>
<dbReference type="ProteomicsDB" id="283604"/>
<dbReference type="Antibodypedia" id="29441">
    <property type="antibodies" value="158 antibodies from 27 providers"/>
</dbReference>
<dbReference type="DNASU" id="237759"/>
<dbReference type="Ensembl" id="ENSMUST00000102765.9">
    <property type="protein sequence ID" value="ENSMUSP00000099826.3"/>
    <property type="gene ID" value="ENSMUSG00000063564.14"/>
</dbReference>
<dbReference type="GeneID" id="237759"/>
<dbReference type="KEGG" id="mmu:237759"/>
<dbReference type="UCSC" id="uc033fvj.1">
    <property type="organism name" value="mouse"/>
</dbReference>
<dbReference type="AGR" id="MGI:2653243"/>
<dbReference type="CTD" id="91522"/>
<dbReference type="MGI" id="MGI:2653243">
    <property type="gene designation" value="Col23a1"/>
</dbReference>
<dbReference type="VEuPathDB" id="HostDB:ENSMUSG00000063564"/>
<dbReference type="eggNOG" id="KOG3544">
    <property type="taxonomic scope" value="Eukaryota"/>
</dbReference>
<dbReference type="GeneTree" id="ENSGT00940000162238"/>
<dbReference type="HOGENOM" id="CLU_001074_21_2_1"/>
<dbReference type="InParanoid" id="Q8K4G2"/>
<dbReference type="OMA" id="MYGTHAS"/>
<dbReference type="OrthoDB" id="5983381at2759"/>
<dbReference type="PhylomeDB" id="Q8K4G2"/>
<dbReference type="TreeFam" id="TF338175"/>
<dbReference type="Reactome" id="R-MMU-1650814">
    <property type="pathway name" value="Collagen biosynthesis and modifying enzymes"/>
</dbReference>
<dbReference type="Reactome" id="R-MMU-8948216">
    <property type="pathway name" value="Collagen chain trimerization"/>
</dbReference>
<dbReference type="BioGRID-ORCS" id="237759">
    <property type="hits" value="3 hits in 76 CRISPR screens"/>
</dbReference>
<dbReference type="PRO" id="PR:Q8K4G2"/>
<dbReference type="Proteomes" id="UP000000589">
    <property type="component" value="Chromosome 11"/>
</dbReference>
<dbReference type="RNAct" id="Q8K4G2">
    <property type="molecule type" value="protein"/>
</dbReference>
<dbReference type="Bgee" id="ENSMUSG00000063564">
    <property type="expression patterns" value="Expressed in median eminence of neurohypophysis and 214 other cell types or tissues"/>
</dbReference>
<dbReference type="ExpressionAtlas" id="Q8K4G2">
    <property type="expression patterns" value="baseline and differential"/>
</dbReference>
<dbReference type="GO" id="GO:0009986">
    <property type="term" value="C:cell surface"/>
    <property type="evidence" value="ECO:0007669"/>
    <property type="project" value="Ensembl"/>
</dbReference>
<dbReference type="GO" id="GO:0005581">
    <property type="term" value="C:collagen trimer"/>
    <property type="evidence" value="ECO:0007669"/>
    <property type="project" value="UniProtKB-KW"/>
</dbReference>
<dbReference type="GO" id="GO:0062023">
    <property type="term" value="C:collagen-containing extracellular matrix"/>
    <property type="evidence" value="ECO:0007005"/>
    <property type="project" value="BHF-UCL"/>
</dbReference>
<dbReference type="GO" id="GO:0005576">
    <property type="term" value="C:extracellular region"/>
    <property type="evidence" value="ECO:0000304"/>
    <property type="project" value="Reactome"/>
</dbReference>
<dbReference type="GO" id="GO:0005615">
    <property type="term" value="C:extracellular space"/>
    <property type="evidence" value="ECO:0007669"/>
    <property type="project" value="Ensembl"/>
</dbReference>
<dbReference type="GO" id="GO:0005886">
    <property type="term" value="C:plasma membrane"/>
    <property type="evidence" value="ECO:0000304"/>
    <property type="project" value="Reactome"/>
</dbReference>
<dbReference type="GO" id="GO:0008201">
    <property type="term" value="F:heparin binding"/>
    <property type="evidence" value="ECO:0007669"/>
    <property type="project" value="Ensembl"/>
</dbReference>
<dbReference type="GO" id="GO:0042802">
    <property type="term" value="F:identical protein binding"/>
    <property type="evidence" value="ECO:0007669"/>
    <property type="project" value="Ensembl"/>
</dbReference>
<dbReference type="InterPro" id="IPR008160">
    <property type="entry name" value="Collagen"/>
</dbReference>
<dbReference type="InterPro" id="IPR050938">
    <property type="entry name" value="Collagen_Structural_Proteins"/>
</dbReference>
<dbReference type="PANTHER" id="PTHR37456:SF4">
    <property type="entry name" value="COLLAGEN ALPHA-1(XXIII) CHAIN"/>
    <property type="match status" value="1"/>
</dbReference>
<dbReference type="PANTHER" id="PTHR37456">
    <property type="entry name" value="SI:CH211-266K2.1"/>
    <property type="match status" value="1"/>
</dbReference>
<dbReference type="Pfam" id="PF01391">
    <property type="entry name" value="Collagen"/>
    <property type="match status" value="6"/>
</dbReference>
<feature type="chain" id="PRO_0000245227" description="Collagen alpha-1(XXIII) chain">
    <location>
        <begin position="1"/>
        <end position="532"/>
    </location>
</feature>
<feature type="topological domain" description="Cytoplasmic" evidence="2">
    <location>
        <begin position="1"/>
        <end position="23"/>
    </location>
</feature>
<feature type="transmembrane region" description="Helical; Signal-anchor for type II membrane protein" evidence="2">
    <location>
        <begin position="24"/>
        <end position="45"/>
    </location>
</feature>
<feature type="topological domain" description="Extracellular" evidence="2">
    <location>
        <begin position="46"/>
        <end position="532"/>
    </location>
</feature>
<feature type="domain" description="Collagen-like 1">
    <location>
        <begin position="108"/>
        <end position="166"/>
    </location>
</feature>
<feature type="domain" description="Collagen-like 2">
    <location>
        <begin position="173"/>
        <end position="232"/>
    </location>
</feature>
<feature type="domain" description="Collagen-like 3">
    <location>
        <begin position="240"/>
        <end position="298"/>
    </location>
</feature>
<feature type="domain" description="Collagen-like 4">
    <location>
        <begin position="313"/>
        <end position="372"/>
    </location>
</feature>
<feature type="domain" description="Collagen-like 5">
    <location>
        <begin position="404"/>
        <end position="452"/>
    </location>
</feature>
<feature type="domain" description="Collagen-like 6">
    <location>
        <begin position="455"/>
        <end position="514"/>
    </location>
</feature>
<feature type="region of interest" description="Disordered" evidence="3">
    <location>
        <begin position="102"/>
        <end position="296"/>
    </location>
</feature>
<feature type="region of interest" description="Disordered" evidence="3">
    <location>
        <begin position="308"/>
        <end position="532"/>
    </location>
</feature>
<feature type="compositionally biased region" description="Low complexity" evidence="3">
    <location>
        <begin position="129"/>
        <end position="145"/>
    </location>
</feature>
<feature type="compositionally biased region" description="Pro residues" evidence="3">
    <location>
        <begin position="174"/>
        <end position="184"/>
    </location>
</feature>
<feature type="compositionally biased region" description="Low complexity" evidence="3">
    <location>
        <begin position="196"/>
        <end position="207"/>
    </location>
</feature>
<feature type="compositionally biased region" description="Pro residues" evidence="3">
    <location>
        <begin position="314"/>
        <end position="326"/>
    </location>
</feature>
<feature type="compositionally biased region" description="Basic and acidic residues" evidence="3">
    <location>
        <begin position="342"/>
        <end position="354"/>
    </location>
</feature>
<feature type="compositionally biased region" description="Basic and acidic residues" evidence="3">
    <location>
        <begin position="380"/>
        <end position="393"/>
    </location>
</feature>
<feature type="compositionally biased region" description="Pro residues" evidence="3">
    <location>
        <begin position="403"/>
        <end position="414"/>
    </location>
</feature>
<feature type="compositionally biased region" description="Basic and acidic residues" evidence="3">
    <location>
        <begin position="427"/>
        <end position="441"/>
    </location>
</feature>
<feature type="compositionally biased region" description="Basic and acidic residues" evidence="3">
    <location>
        <begin position="478"/>
        <end position="495"/>
    </location>
</feature>
<feature type="sequence conflict" description="In Ref. 1; AAN03649." evidence="4" ref="1">
    <original>A</original>
    <variation>P</variation>
    <location>
        <position position="288"/>
    </location>
</feature>
<accession>Q8K4G2</accession>
<accession>Q5SUQ0</accession>
<reference key="1">
    <citation type="submission" date="2001-08" db="EMBL/GenBank/DDBJ databases">
        <title>Alpha 1(XXIII), a new member of the transmembrane collagens.</title>
        <authorList>
            <person name="Koch M."/>
            <person name="Jin W."/>
            <person name="Burgeson R.E."/>
        </authorList>
    </citation>
    <scope>NUCLEOTIDE SEQUENCE [MRNA]</scope>
    <source>
        <tissue>Cartilage</tissue>
    </source>
</reference>
<reference key="2">
    <citation type="journal article" date="2009" name="PLoS Biol.">
        <title>Lineage-specific biology revealed by a finished genome assembly of the mouse.</title>
        <authorList>
            <person name="Church D.M."/>
            <person name="Goodstadt L."/>
            <person name="Hillier L.W."/>
            <person name="Zody M.C."/>
            <person name="Goldstein S."/>
            <person name="She X."/>
            <person name="Bult C.J."/>
            <person name="Agarwala R."/>
            <person name="Cherry J.L."/>
            <person name="DiCuccio M."/>
            <person name="Hlavina W."/>
            <person name="Kapustin Y."/>
            <person name="Meric P."/>
            <person name="Maglott D."/>
            <person name="Birtle Z."/>
            <person name="Marques A.C."/>
            <person name="Graves T."/>
            <person name="Zhou S."/>
            <person name="Teague B."/>
            <person name="Potamousis K."/>
            <person name="Churas C."/>
            <person name="Place M."/>
            <person name="Herschleb J."/>
            <person name="Runnheim R."/>
            <person name="Forrest D."/>
            <person name="Amos-Landgraf J."/>
            <person name="Schwartz D.C."/>
            <person name="Cheng Z."/>
            <person name="Lindblad-Toh K."/>
            <person name="Eichler E.E."/>
            <person name="Ponting C.P."/>
        </authorList>
    </citation>
    <scope>NUCLEOTIDE SEQUENCE [LARGE SCALE GENOMIC DNA]</scope>
    <source>
        <strain>C57BL/6J</strain>
    </source>
</reference>
<organism>
    <name type="scientific">Mus musculus</name>
    <name type="common">Mouse</name>
    <dbReference type="NCBI Taxonomy" id="10090"/>
    <lineage>
        <taxon>Eukaryota</taxon>
        <taxon>Metazoa</taxon>
        <taxon>Chordata</taxon>
        <taxon>Craniata</taxon>
        <taxon>Vertebrata</taxon>
        <taxon>Euteleostomi</taxon>
        <taxon>Mammalia</taxon>
        <taxon>Eutheria</taxon>
        <taxon>Euarchontoglires</taxon>
        <taxon>Glires</taxon>
        <taxon>Rodentia</taxon>
        <taxon>Myomorpha</taxon>
        <taxon>Muroidea</taxon>
        <taxon>Muridae</taxon>
        <taxon>Murinae</taxon>
        <taxon>Mus</taxon>
        <taxon>Mus</taxon>
    </lineage>
</organism>
<protein>
    <recommendedName>
        <fullName>Collagen alpha-1(XXIII) chain</fullName>
    </recommendedName>
</protein>